<evidence type="ECO:0000255" key="1"/>
<evidence type="ECO:0000255" key="2">
    <source>
        <dbReference type="PROSITE-ProRule" id="PRU00328"/>
    </source>
</evidence>
<evidence type="ECO:0000256" key="3">
    <source>
        <dbReference type="SAM" id="MobiDB-lite"/>
    </source>
</evidence>
<evidence type="ECO:0000269" key="4">
    <source>
    </source>
</evidence>
<evidence type="ECO:0000269" key="5">
    <source>
    </source>
</evidence>
<evidence type="ECO:0000269" key="6">
    <source>
    </source>
</evidence>
<evidence type="ECO:0000269" key="7">
    <source>
    </source>
</evidence>
<evidence type="ECO:0000269" key="8">
    <source>
    </source>
</evidence>
<evidence type="ECO:0000303" key="9">
    <source>
    </source>
</evidence>
<evidence type="ECO:0000305" key="10"/>
<evidence type="ECO:0000312" key="11">
    <source>
        <dbReference type="Araport" id="AT1G54440"/>
    </source>
</evidence>
<evidence type="ECO:0000312" key="12">
    <source>
        <dbReference type="EMBL" id="AAD25623.1"/>
    </source>
</evidence>
<proteinExistence type="evidence at transcript level"/>
<name>RP6L1_ARATH</name>
<comment type="function">
    <text evidence="4 5 6 7 8">Acts as an important epigenetic regulator through multiple silencing mechanisms (PubMed:23555312, PubMed:24719467, PubMed:24726328, PubMed:25211139). Involved in transcriptional gene silencing (TGS). Plays a role for DNA methylation in the RNA-directed DNA methylation (RdDM) pathway. Contributes to the methylation status of the retrotransposon SN1. Required for DNA methylation only at a subset of RdDM target loci (PubMed:24719467). Plays a regulatory role in RdDM through retention of non-coding RNAs (ncRNAs) in normal cells. Helps to retain Pol V-transcribed RNAs in chromatin to enable their scaffold function and is required for genome-wide Pol IV-dependent siRNA (24 nt siRNA) production that may involve retention of Pol IV transcripts (PubMed:24726328). Involved in association with RRP6L2 in the silencing of the solo LTR locus. Controls levels of ncRNAs from the solo LTR locus. Seems to function independently of the RdDM pathway (PubMed:23555312). Functions redundantly with RRP6L2 in the regulation of FLC locus. Participates in the maintenance of trimethylated 'Lys-27' (H3K27me3) at FLC locus via the regulation of antisense long non-coding RNAs (lncRNAs) and the regulation of diverse antisense RNAs derived from the FLC locus (PubMed:25211139). Seems not involved in the exosomal RNA degradation (PubMed:24726328, PubMed:25211139). Can complement the growth defect of a yeast mutant lacking RRP6 exonuclease (PubMed:18285452).</text>
</comment>
<comment type="subcellular location">
    <subcellularLocation>
        <location evidence="4">Nucleus</location>
    </subcellularLocation>
    <subcellularLocation>
        <location evidence="4">Nucleus</location>
        <location evidence="4">Nucleoplasm</location>
    </subcellularLocation>
    <text evidence="4">Also detected in the nucleolar vacuole.</text>
</comment>
<comment type="alternative products">
    <event type="alternative splicing"/>
    <isoform>
        <id>Q0WVE8-1</id>
        <name>1</name>
        <sequence type="displayed"/>
    </isoform>
    <text evidence="10">A number of isoforms are produced. According to EST sequences.</text>
</comment>
<comment type="disruption phenotype">
    <text evidence="4 8">No visible phenotype under normal growth conditions (PubMed:18285452, PubMed:25211139). The double mutants rrp6l1 and rrp6l2 have a late flowering phenotype (PubMed:25211139).</text>
</comment>
<comment type="sequence caution" evidence="10">
    <conflict type="erroneous gene model prediction">
        <sequence resource="EMBL-CDS" id="AAD25623"/>
    </conflict>
</comment>
<comment type="sequence caution" evidence="10">
    <conflict type="frameshift">
        <sequence resource="EMBL-CDS" id="BAF01584"/>
    </conflict>
</comment>
<protein>
    <recommendedName>
        <fullName evidence="9">Protein RRP6-like 1</fullName>
        <shortName evidence="9">AtRRP6L1</shortName>
    </recommendedName>
</protein>
<reference key="1">
    <citation type="journal article" date="2008" name="Mol. Cell. Biol.">
        <title>Degradation of a polyadenylated rRNA maturation by-product involves one of the three RRP6-like proteins in Arabidopsis thaliana.</title>
        <authorList>
            <person name="Lange H."/>
            <person name="Holec S."/>
            <person name="Cognat V."/>
            <person name="Pieuchot L."/>
            <person name="Le Ret M."/>
            <person name="Canaday J."/>
            <person name="Gagliardi D."/>
        </authorList>
    </citation>
    <scope>NUCLEOTIDE SEQUENCE [MRNA]</scope>
    <scope>FUNCTION</scope>
    <scope>SUBCELLULAR LOCATION</scope>
    <scope>DISRUPTION PHENOTYPE</scope>
    <source>
        <strain>cv. Columbia</strain>
    </source>
</reference>
<reference key="2">
    <citation type="journal article" date="2000" name="Nature">
        <title>Sequence and analysis of chromosome 1 of the plant Arabidopsis thaliana.</title>
        <authorList>
            <person name="Theologis A."/>
            <person name="Ecker J.R."/>
            <person name="Palm C.J."/>
            <person name="Federspiel N.A."/>
            <person name="Kaul S."/>
            <person name="White O."/>
            <person name="Alonso J."/>
            <person name="Altafi H."/>
            <person name="Araujo R."/>
            <person name="Bowman C.L."/>
            <person name="Brooks S.Y."/>
            <person name="Buehler E."/>
            <person name="Chan A."/>
            <person name="Chao Q."/>
            <person name="Chen H."/>
            <person name="Cheuk R.F."/>
            <person name="Chin C.W."/>
            <person name="Chung M.K."/>
            <person name="Conn L."/>
            <person name="Conway A.B."/>
            <person name="Conway A.R."/>
            <person name="Creasy T.H."/>
            <person name="Dewar K."/>
            <person name="Dunn P."/>
            <person name="Etgu P."/>
            <person name="Feldblyum T.V."/>
            <person name="Feng J.-D."/>
            <person name="Fong B."/>
            <person name="Fujii C.Y."/>
            <person name="Gill J.E."/>
            <person name="Goldsmith A.D."/>
            <person name="Haas B."/>
            <person name="Hansen N.F."/>
            <person name="Hughes B."/>
            <person name="Huizar L."/>
            <person name="Hunter J.L."/>
            <person name="Jenkins J."/>
            <person name="Johnson-Hopson C."/>
            <person name="Khan S."/>
            <person name="Khaykin E."/>
            <person name="Kim C.J."/>
            <person name="Koo H.L."/>
            <person name="Kremenetskaia I."/>
            <person name="Kurtz D.B."/>
            <person name="Kwan A."/>
            <person name="Lam B."/>
            <person name="Langin-Hooper S."/>
            <person name="Lee A."/>
            <person name="Lee J.M."/>
            <person name="Lenz C.A."/>
            <person name="Li J.H."/>
            <person name="Li Y.-P."/>
            <person name="Lin X."/>
            <person name="Liu S.X."/>
            <person name="Liu Z.A."/>
            <person name="Luros J.S."/>
            <person name="Maiti R."/>
            <person name="Marziali A."/>
            <person name="Militscher J."/>
            <person name="Miranda M."/>
            <person name="Nguyen M."/>
            <person name="Nierman W.C."/>
            <person name="Osborne B.I."/>
            <person name="Pai G."/>
            <person name="Peterson J."/>
            <person name="Pham P.K."/>
            <person name="Rizzo M."/>
            <person name="Rooney T."/>
            <person name="Rowley D."/>
            <person name="Sakano H."/>
            <person name="Salzberg S.L."/>
            <person name="Schwartz J.R."/>
            <person name="Shinn P."/>
            <person name="Southwick A.M."/>
            <person name="Sun H."/>
            <person name="Tallon L.J."/>
            <person name="Tambunga G."/>
            <person name="Toriumi M.J."/>
            <person name="Town C.D."/>
            <person name="Utterback T."/>
            <person name="Van Aken S."/>
            <person name="Vaysberg M."/>
            <person name="Vysotskaia V.S."/>
            <person name="Walker M."/>
            <person name="Wu D."/>
            <person name="Yu G."/>
            <person name="Fraser C.M."/>
            <person name="Venter J.C."/>
            <person name="Davis R.W."/>
        </authorList>
    </citation>
    <scope>NUCLEOTIDE SEQUENCE [LARGE SCALE GENOMIC DNA]</scope>
    <source>
        <strain>cv. Columbia</strain>
    </source>
</reference>
<reference key="3">
    <citation type="journal article" date="2017" name="Plant J.">
        <title>Araport11: a complete reannotation of the Arabidopsis thaliana reference genome.</title>
        <authorList>
            <person name="Cheng C.Y."/>
            <person name="Krishnakumar V."/>
            <person name="Chan A.P."/>
            <person name="Thibaud-Nissen F."/>
            <person name="Schobel S."/>
            <person name="Town C.D."/>
        </authorList>
    </citation>
    <scope>GENOME REANNOTATION</scope>
    <source>
        <strain>cv. Columbia</strain>
    </source>
</reference>
<reference key="4">
    <citation type="submission" date="2006-07" db="EMBL/GenBank/DDBJ databases">
        <title>Large-scale analysis of RIKEN Arabidopsis full-length (RAFL) cDNAs.</title>
        <authorList>
            <person name="Totoki Y."/>
            <person name="Seki M."/>
            <person name="Ishida J."/>
            <person name="Nakajima M."/>
            <person name="Enju A."/>
            <person name="Kamiya A."/>
            <person name="Narusaka M."/>
            <person name="Shin-i T."/>
            <person name="Nakagawa M."/>
            <person name="Sakamoto N."/>
            <person name="Oishi K."/>
            <person name="Kohara Y."/>
            <person name="Kobayashi M."/>
            <person name="Toyoda A."/>
            <person name="Sakaki Y."/>
            <person name="Sakurai T."/>
            <person name="Iida K."/>
            <person name="Akiyama K."/>
            <person name="Satou M."/>
            <person name="Toyoda T."/>
            <person name="Konagaya A."/>
            <person name="Carninci P."/>
            <person name="Kawai J."/>
            <person name="Hayashizaki Y."/>
            <person name="Shinozaki K."/>
        </authorList>
    </citation>
    <scope>NUCLEOTIDE SEQUENCE [LARGE SCALE MRNA]</scope>
    <source>
        <strain>cv. Columbia</strain>
    </source>
</reference>
<reference key="5">
    <citation type="journal article" date="2013" name="PLoS Genet.">
        <title>The role of the Arabidopsis Exosome in siRNA-independent silencing of heterochromatic loci.</title>
        <authorList>
            <person name="Shin J.H."/>
            <person name="Wang H.L."/>
            <person name="Lee J."/>
            <person name="Dinwiddie B.L."/>
            <person name="Belostotsky D.A."/>
            <person name="Chekanova J.A."/>
        </authorList>
    </citation>
    <scope>FUNCTION</scope>
</reference>
<reference key="6">
    <citation type="journal article" date="2014" name="Mol. Cell">
        <title>An Rrp6-like protein positively regulates noncoding RNA levels and DNA methylation in Arabidopsis.</title>
        <authorList>
            <person name="Zhang H."/>
            <person name="Tang K."/>
            <person name="Qian W."/>
            <person name="Duan C.G."/>
            <person name="Wang B."/>
            <person name="Zhang H."/>
            <person name="Wang P."/>
            <person name="Zhu X."/>
            <person name="Lang Z."/>
            <person name="Yang Y."/>
            <person name="Zhu J.K."/>
        </authorList>
    </citation>
    <scope>FUNCTION</scope>
</reference>
<reference key="7">
    <citation type="journal article" date="2014" name="Mol. Plant">
        <title>AtRRP6L1, a homolog of conserved yeast Exosomal Rrp6p, plays an important role in transcriptional gene silencing in arabidopsis.</title>
        <authorList>
            <person name="Hsu Y.F."/>
            <person name="Hsiao Y.C."/>
            <person name="Wang C.S."/>
            <person name="Zhan X."/>
            <person name="Zhang H."/>
            <person name="Wang C.S."/>
        </authorList>
    </citation>
    <scope>FUNCTION</scope>
</reference>
<reference key="8">
    <citation type="journal article" date="2014" name="PLoS Genet.">
        <title>Arabidopsis RRP6L1 and RRP6L2 function in FLOWERING LOCUS C silencing via regulation of antisense RNA synthesis.</title>
        <authorList>
            <person name="Shin J.H."/>
            <person name="Chekanova J.A."/>
        </authorList>
    </citation>
    <scope>FUNCTION</scope>
    <scope>DISRUPTION PHENOTYPE</scope>
</reference>
<organism>
    <name type="scientific">Arabidopsis thaliana</name>
    <name type="common">Mouse-ear cress</name>
    <dbReference type="NCBI Taxonomy" id="3702"/>
    <lineage>
        <taxon>Eukaryota</taxon>
        <taxon>Viridiplantae</taxon>
        <taxon>Streptophyta</taxon>
        <taxon>Embryophyta</taxon>
        <taxon>Tracheophyta</taxon>
        <taxon>Spermatophyta</taxon>
        <taxon>Magnoliopsida</taxon>
        <taxon>eudicotyledons</taxon>
        <taxon>Gunneridae</taxon>
        <taxon>Pentapetalae</taxon>
        <taxon>rosids</taxon>
        <taxon>malvids</taxon>
        <taxon>Brassicales</taxon>
        <taxon>Brassicaceae</taxon>
        <taxon>Camelineae</taxon>
        <taxon>Arabidopsis</taxon>
    </lineage>
</organism>
<gene>
    <name evidence="9" type="primary">RRP6L1</name>
    <name evidence="11" type="ordered locus">At1g54440</name>
    <name evidence="12" type="ORF">F20D21.26</name>
</gene>
<dbReference type="EMBL" id="EU240662">
    <property type="protein sequence ID" value="ABX52079.1"/>
    <property type="molecule type" value="mRNA"/>
</dbReference>
<dbReference type="EMBL" id="AC005287">
    <property type="protein sequence ID" value="AAD25623.1"/>
    <property type="status" value="ALT_SEQ"/>
    <property type="molecule type" value="Genomic_DNA"/>
</dbReference>
<dbReference type="EMBL" id="CP002684">
    <property type="protein sequence ID" value="AEE33102.1"/>
    <property type="molecule type" value="Genomic_DNA"/>
</dbReference>
<dbReference type="EMBL" id="AK226803">
    <property type="protein sequence ID" value="BAE98900.1"/>
    <property type="molecule type" value="mRNA"/>
</dbReference>
<dbReference type="EMBL" id="AK229747">
    <property type="protein sequence ID" value="BAF01584.1"/>
    <property type="status" value="ALT_FRAME"/>
    <property type="molecule type" value="mRNA"/>
</dbReference>
<dbReference type="PIR" id="C96586">
    <property type="entry name" value="C96586"/>
</dbReference>
<dbReference type="RefSeq" id="NP_175846.3">
    <molecule id="Q0WVE8-1"/>
    <property type="nucleotide sequence ID" value="NM_104322.5"/>
</dbReference>
<dbReference type="SMR" id="Q0WVE8"/>
<dbReference type="FunCoup" id="Q0WVE8">
    <property type="interactions" value="3876"/>
</dbReference>
<dbReference type="IntAct" id="Q0WVE8">
    <property type="interactions" value="1"/>
</dbReference>
<dbReference type="STRING" id="3702.Q0WVE8"/>
<dbReference type="iPTMnet" id="Q0WVE8"/>
<dbReference type="PaxDb" id="3702-AT1G54440.2"/>
<dbReference type="EnsemblPlants" id="AT1G54440.1">
    <molecule id="Q0WVE8-1"/>
    <property type="protein sequence ID" value="AT1G54440.1"/>
    <property type="gene ID" value="AT1G54440"/>
</dbReference>
<dbReference type="GeneID" id="841886"/>
<dbReference type="Gramene" id="AT1G54440.1">
    <molecule id="Q0WVE8-1"/>
    <property type="protein sequence ID" value="AT1G54440.1"/>
    <property type="gene ID" value="AT1G54440"/>
</dbReference>
<dbReference type="KEGG" id="ath:AT1G54440"/>
<dbReference type="Araport" id="AT1G54440"/>
<dbReference type="TAIR" id="AT1G54440">
    <property type="gene designation" value="RRP6L1"/>
</dbReference>
<dbReference type="eggNOG" id="KOG2206">
    <property type="taxonomic scope" value="Eukaryota"/>
</dbReference>
<dbReference type="InParanoid" id="Q0WVE8"/>
<dbReference type="PhylomeDB" id="Q0WVE8"/>
<dbReference type="PRO" id="PR:Q0WVE8"/>
<dbReference type="Proteomes" id="UP000006548">
    <property type="component" value="Chromosome 1"/>
</dbReference>
<dbReference type="ExpressionAtlas" id="Q0WVE8">
    <property type="expression patterns" value="baseline and differential"/>
</dbReference>
<dbReference type="GO" id="GO:0005730">
    <property type="term" value="C:nucleolus"/>
    <property type="evidence" value="ECO:0000314"/>
    <property type="project" value="UniProtKB"/>
</dbReference>
<dbReference type="GO" id="GO:0005654">
    <property type="term" value="C:nucleoplasm"/>
    <property type="evidence" value="ECO:0007669"/>
    <property type="project" value="UniProtKB-SubCell"/>
</dbReference>
<dbReference type="GO" id="GO:0005634">
    <property type="term" value="C:nucleus"/>
    <property type="evidence" value="ECO:0000314"/>
    <property type="project" value="UniProtKB"/>
</dbReference>
<dbReference type="GO" id="GO:0000175">
    <property type="term" value="F:3'-5'-RNA exonuclease activity"/>
    <property type="evidence" value="ECO:0000315"/>
    <property type="project" value="UniProtKB"/>
</dbReference>
<dbReference type="GO" id="GO:0003676">
    <property type="term" value="F:nucleic acid binding"/>
    <property type="evidence" value="ECO:0007669"/>
    <property type="project" value="InterPro"/>
</dbReference>
<dbReference type="GO" id="GO:0000166">
    <property type="term" value="F:nucleotide binding"/>
    <property type="evidence" value="ECO:0007669"/>
    <property type="project" value="InterPro"/>
</dbReference>
<dbReference type="GO" id="GO:0000467">
    <property type="term" value="P:exonucleolytic trimming to generate mature 3'-end of 5.8S rRNA from tricistronic rRNA transcript (SSU-rRNA, 5.8S rRNA, LSU-rRNA)"/>
    <property type="evidence" value="ECO:0007669"/>
    <property type="project" value="InterPro"/>
</dbReference>
<dbReference type="GO" id="GO:0080188">
    <property type="term" value="P:gene silencing by siRNA-directed DNA methylation"/>
    <property type="evidence" value="ECO:0000315"/>
    <property type="project" value="UniProtKB"/>
</dbReference>
<dbReference type="CDD" id="cd06147">
    <property type="entry name" value="Rrp6p_like_exo"/>
    <property type="match status" value="1"/>
</dbReference>
<dbReference type="FunFam" id="3.30.420.10:FF:000065">
    <property type="entry name" value="Protein RRP6-like 2 isoform A"/>
    <property type="match status" value="1"/>
</dbReference>
<dbReference type="FunFam" id="1.10.150.80:FF:000001">
    <property type="entry name" value="Putative exosome component 10"/>
    <property type="match status" value="1"/>
</dbReference>
<dbReference type="Gene3D" id="1.10.150.80">
    <property type="entry name" value="HRDC domain"/>
    <property type="match status" value="1"/>
</dbReference>
<dbReference type="Gene3D" id="3.30.420.10">
    <property type="entry name" value="Ribonuclease H-like superfamily/Ribonuclease H"/>
    <property type="match status" value="1"/>
</dbReference>
<dbReference type="InterPro" id="IPR002562">
    <property type="entry name" value="3'-5'_exonuclease_dom"/>
</dbReference>
<dbReference type="InterPro" id="IPR010997">
    <property type="entry name" value="HRDC-like_sf"/>
</dbReference>
<dbReference type="InterPro" id="IPR002121">
    <property type="entry name" value="HRDC_dom"/>
</dbReference>
<dbReference type="InterPro" id="IPR044876">
    <property type="entry name" value="HRDC_dom_sf"/>
</dbReference>
<dbReference type="InterPro" id="IPR012337">
    <property type="entry name" value="RNaseH-like_sf"/>
</dbReference>
<dbReference type="InterPro" id="IPR036397">
    <property type="entry name" value="RNaseH_sf"/>
</dbReference>
<dbReference type="InterPro" id="IPR045092">
    <property type="entry name" value="Rrp6-like"/>
</dbReference>
<dbReference type="InterPro" id="IPR049559">
    <property type="entry name" value="Rrp6p-like_exo"/>
</dbReference>
<dbReference type="PANTHER" id="PTHR12124">
    <property type="entry name" value="POLYMYOSITIS/SCLERODERMA AUTOANTIGEN-RELATED"/>
    <property type="match status" value="1"/>
</dbReference>
<dbReference type="PANTHER" id="PTHR12124:SF69">
    <property type="entry name" value="PROTEIN RRP6-LIKE 1"/>
    <property type="match status" value="1"/>
</dbReference>
<dbReference type="Pfam" id="PF01612">
    <property type="entry name" value="DNA_pol_A_exo1"/>
    <property type="match status" value="1"/>
</dbReference>
<dbReference type="Pfam" id="PF00570">
    <property type="entry name" value="HRDC"/>
    <property type="match status" value="1"/>
</dbReference>
<dbReference type="SMART" id="SM00474">
    <property type="entry name" value="35EXOc"/>
    <property type="match status" value="1"/>
</dbReference>
<dbReference type="SMART" id="SM00341">
    <property type="entry name" value="HRDC"/>
    <property type="match status" value="1"/>
</dbReference>
<dbReference type="SUPFAM" id="SSF47819">
    <property type="entry name" value="HRDC-like"/>
    <property type="match status" value="1"/>
</dbReference>
<dbReference type="SUPFAM" id="SSF53098">
    <property type="entry name" value="Ribonuclease H-like"/>
    <property type="match status" value="1"/>
</dbReference>
<dbReference type="PROSITE" id="PS50967">
    <property type="entry name" value="HRDC"/>
    <property type="match status" value="1"/>
</dbReference>
<accession>Q0WVE8</accession>
<accession>Q0WMR6</accession>
<accession>Q9SLI9</accession>
<sequence length="637" mass="73483">MRFDDPMDEFKRNRKMEEDSKKVIDVKVAESDKGFAKFGKAEVPFHIPTLTKPQEEYKILVDNANNPFEHVLLEKSEDGLRFIHPLEELSVMDFVDRNLSEMRPVKPLPLEETPFKLVEEVKDLEDLAAALQSVEEFAVDLEHNQYRTFQGLTCLMQISTRTEDYIVDIFKLWDHIGPYLRELFKDPKKKKVIHGADRDIIWLQRDFGIYVCNLFDTGQASRVLKLERNSLEFLLKHYCGVAANKEYQKADWRIRPLPDVMKRYAREDTHYLLYIYDVMRMELHTMAKEDEQSDSPLVEVYKRSYDVCMQLYEKELWTRDSYLHVYGVQTGNLNAVQLSIVAGLCEWRDRIARADDESTGYVLPNKTLFDIAKEMPIVVAQLRRLLKSKLPYLERNFDAVISVIRRSMQNAAAFEPVVQSLKDRRPETVVEMNIEPKIEKTDTGASASSLSLEKVCVDDSKKQSSGFGVLPLKRKLESDKTVVEKNIEPKIEKTGTEASASSLSSKKVCVDDSKKQSSGFGVLLSKRKFESDNKVKEEVKVSKSKPDKVIIVVDDDDDDDDDESYEQSTKAADALDRVSETPSKGSPSLTQKPKTCNTEVIVLDDDDDSESREDEDMRRRSEKHRRFMNMKRGFLNI</sequence>
<keyword id="KW-0025">Alternative splicing</keyword>
<keyword id="KW-0539">Nucleus</keyword>
<keyword id="KW-1185">Reference proteome</keyword>
<keyword id="KW-0943">RNA-mediated gene silencing</keyword>
<feature type="chain" id="PRO_0000433630" description="Protein RRP6-like 1">
    <location>
        <begin position="1"/>
        <end position="637"/>
    </location>
</feature>
<feature type="domain" description="3'-5' exonuclease" evidence="1">
    <location>
        <begin position="118"/>
        <end position="283"/>
    </location>
</feature>
<feature type="domain" description="HRDC" evidence="2">
    <location>
        <begin position="334"/>
        <end position="414"/>
    </location>
</feature>
<feature type="region of interest" description="Disordered" evidence="3">
    <location>
        <begin position="553"/>
        <end position="624"/>
    </location>
</feature>
<feature type="compositionally biased region" description="Acidic residues" evidence="3">
    <location>
        <begin position="553"/>
        <end position="565"/>
    </location>
</feature>
<feature type="compositionally biased region" description="Polar residues" evidence="3">
    <location>
        <begin position="580"/>
        <end position="598"/>
    </location>
</feature>
<feature type="compositionally biased region" description="Acidic residues" evidence="3">
    <location>
        <begin position="602"/>
        <end position="614"/>
    </location>
</feature>